<name>RS10_KLEP7</name>
<dbReference type="EMBL" id="CP000647">
    <property type="protein sequence ID" value="ABR79107.1"/>
    <property type="molecule type" value="Genomic_DNA"/>
</dbReference>
<dbReference type="RefSeq" id="WP_001181005.1">
    <property type="nucleotide sequence ID" value="NC_009648.1"/>
</dbReference>
<dbReference type="SMR" id="A6TEX3"/>
<dbReference type="STRING" id="272620.KPN_03720"/>
<dbReference type="jPOST" id="A6TEX3"/>
<dbReference type="PaxDb" id="272620-KPN_03720"/>
<dbReference type="EnsemblBacteria" id="ABR79107">
    <property type="protein sequence ID" value="ABR79107"/>
    <property type="gene ID" value="KPN_03720"/>
</dbReference>
<dbReference type="GeneID" id="98390443"/>
<dbReference type="KEGG" id="kpn:KPN_03720"/>
<dbReference type="HOGENOM" id="CLU_122625_1_3_6"/>
<dbReference type="Proteomes" id="UP000000265">
    <property type="component" value="Chromosome"/>
</dbReference>
<dbReference type="GO" id="GO:1990904">
    <property type="term" value="C:ribonucleoprotein complex"/>
    <property type="evidence" value="ECO:0007669"/>
    <property type="project" value="UniProtKB-KW"/>
</dbReference>
<dbReference type="GO" id="GO:0005840">
    <property type="term" value="C:ribosome"/>
    <property type="evidence" value="ECO:0007669"/>
    <property type="project" value="UniProtKB-KW"/>
</dbReference>
<dbReference type="GO" id="GO:0003735">
    <property type="term" value="F:structural constituent of ribosome"/>
    <property type="evidence" value="ECO:0007669"/>
    <property type="project" value="InterPro"/>
</dbReference>
<dbReference type="GO" id="GO:0000049">
    <property type="term" value="F:tRNA binding"/>
    <property type="evidence" value="ECO:0007669"/>
    <property type="project" value="UniProtKB-UniRule"/>
</dbReference>
<dbReference type="GO" id="GO:0006412">
    <property type="term" value="P:translation"/>
    <property type="evidence" value="ECO:0007669"/>
    <property type="project" value="UniProtKB-UniRule"/>
</dbReference>
<dbReference type="FunFam" id="3.30.70.600:FF:000001">
    <property type="entry name" value="30S ribosomal protein S10"/>
    <property type="match status" value="1"/>
</dbReference>
<dbReference type="Gene3D" id="3.30.70.600">
    <property type="entry name" value="Ribosomal protein S10 domain"/>
    <property type="match status" value="1"/>
</dbReference>
<dbReference type="HAMAP" id="MF_00508">
    <property type="entry name" value="Ribosomal_uS10"/>
    <property type="match status" value="1"/>
</dbReference>
<dbReference type="InterPro" id="IPR001848">
    <property type="entry name" value="Ribosomal_uS10"/>
</dbReference>
<dbReference type="InterPro" id="IPR018268">
    <property type="entry name" value="Ribosomal_uS10_CS"/>
</dbReference>
<dbReference type="InterPro" id="IPR027486">
    <property type="entry name" value="Ribosomal_uS10_dom"/>
</dbReference>
<dbReference type="InterPro" id="IPR036838">
    <property type="entry name" value="Ribosomal_uS10_dom_sf"/>
</dbReference>
<dbReference type="NCBIfam" id="NF001861">
    <property type="entry name" value="PRK00596.1"/>
    <property type="match status" value="1"/>
</dbReference>
<dbReference type="NCBIfam" id="TIGR01049">
    <property type="entry name" value="rpsJ_bact"/>
    <property type="match status" value="1"/>
</dbReference>
<dbReference type="PANTHER" id="PTHR11700">
    <property type="entry name" value="30S RIBOSOMAL PROTEIN S10 FAMILY MEMBER"/>
    <property type="match status" value="1"/>
</dbReference>
<dbReference type="Pfam" id="PF00338">
    <property type="entry name" value="Ribosomal_S10"/>
    <property type="match status" value="1"/>
</dbReference>
<dbReference type="PRINTS" id="PR00971">
    <property type="entry name" value="RIBOSOMALS10"/>
</dbReference>
<dbReference type="SMART" id="SM01403">
    <property type="entry name" value="Ribosomal_S10"/>
    <property type="match status" value="1"/>
</dbReference>
<dbReference type="SUPFAM" id="SSF54999">
    <property type="entry name" value="Ribosomal protein S10"/>
    <property type="match status" value="1"/>
</dbReference>
<dbReference type="PROSITE" id="PS00361">
    <property type="entry name" value="RIBOSOMAL_S10"/>
    <property type="match status" value="1"/>
</dbReference>
<gene>
    <name evidence="1" type="primary">rpsJ</name>
    <name type="ordered locus">KPN78578_36830</name>
    <name type="ORF">KPN_03720</name>
</gene>
<protein>
    <recommendedName>
        <fullName evidence="1">Small ribosomal subunit protein uS10</fullName>
    </recommendedName>
    <alternativeName>
        <fullName evidence="2">30S ribosomal protein S10</fullName>
    </alternativeName>
</protein>
<feature type="chain" id="PRO_1000015036" description="Small ribosomal subunit protein uS10">
    <location>
        <begin position="1"/>
        <end position="103"/>
    </location>
</feature>
<keyword id="KW-0687">Ribonucleoprotein</keyword>
<keyword id="KW-0689">Ribosomal protein</keyword>
<comment type="function">
    <text evidence="1">Involved in the binding of tRNA to the ribosomes.</text>
</comment>
<comment type="subunit">
    <text evidence="1">Part of the 30S ribosomal subunit.</text>
</comment>
<comment type="similarity">
    <text evidence="1">Belongs to the universal ribosomal protein uS10 family.</text>
</comment>
<evidence type="ECO:0000255" key="1">
    <source>
        <dbReference type="HAMAP-Rule" id="MF_00508"/>
    </source>
</evidence>
<evidence type="ECO:0000305" key="2"/>
<proteinExistence type="inferred from homology"/>
<organism>
    <name type="scientific">Klebsiella pneumoniae subsp. pneumoniae (strain ATCC 700721 / MGH 78578)</name>
    <dbReference type="NCBI Taxonomy" id="272620"/>
    <lineage>
        <taxon>Bacteria</taxon>
        <taxon>Pseudomonadati</taxon>
        <taxon>Pseudomonadota</taxon>
        <taxon>Gammaproteobacteria</taxon>
        <taxon>Enterobacterales</taxon>
        <taxon>Enterobacteriaceae</taxon>
        <taxon>Klebsiella/Raoultella group</taxon>
        <taxon>Klebsiella</taxon>
        <taxon>Klebsiella pneumoniae complex</taxon>
    </lineage>
</organism>
<accession>A6TEX3</accession>
<reference key="1">
    <citation type="submission" date="2006-09" db="EMBL/GenBank/DDBJ databases">
        <authorList>
            <consortium name="The Klebsiella pneumonia Genome Sequencing Project"/>
            <person name="McClelland M."/>
            <person name="Sanderson E.K."/>
            <person name="Spieth J."/>
            <person name="Clifton W.S."/>
            <person name="Latreille P."/>
            <person name="Sabo A."/>
            <person name="Pepin K."/>
            <person name="Bhonagiri V."/>
            <person name="Porwollik S."/>
            <person name="Ali J."/>
            <person name="Wilson R.K."/>
        </authorList>
    </citation>
    <scope>NUCLEOTIDE SEQUENCE [LARGE SCALE GENOMIC DNA]</scope>
    <source>
        <strain>ATCC 700721 / MGH 78578</strain>
    </source>
</reference>
<sequence>MQNQRIRIRLKAFDHRLIDQSTAEIVETAKRTGAQVRGPIPLPTRKERFTVLISPHVNKDARDQYEIRTHKRLVDIVEPTEKTVDALMRLDLAAGVDVQISLG</sequence>